<evidence type="ECO:0000255" key="1">
    <source>
        <dbReference type="HAMAP-Rule" id="MF_00530"/>
    </source>
</evidence>
<reference key="1">
    <citation type="submission" date="2009-01" db="EMBL/GenBank/DDBJ databases">
        <title>Complete sequence of Clostridium cellulolyticum H10.</title>
        <authorList>
            <consortium name="US DOE Joint Genome Institute"/>
            <person name="Lucas S."/>
            <person name="Copeland A."/>
            <person name="Lapidus A."/>
            <person name="Glavina del Rio T."/>
            <person name="Dalin E."/>
            <person name="Tice H."/>
            <person name="Bruce D."/>
            <person name="Goodwin L."/>
            <person name="Pitluck S."/>
            <person name="Chertkov O."/>
            <person name="Saunders E."/>
            <person name="Brettin T."/>
            <person name="Detter J.C."/>
            <person name="Han C."/>
            <person name="Larimer F."/>
            <person name="Land M."/>
            <person name="Hauser L."/>
            <person name="Kyrpides N."/>
            <person name="Ivanova N."/>
            <person name="Zhou J."/>
            <person name="Richardson P."/>
        </authorList>
    </citation>
    <scope>NUCLEOTIDE SEQUENCE [LARGE SCALE GENOMIC DNA]</scope>
    <source>
        <strain>ATCC 35319 / DSM 5812 / JCM 6584 / H10</strain>
    </source>
</reference>
<proteinExistence type="inferred from homology"/>
<sequence length="134" mass="14945">MATFFLEVLTPDRKFFSGEAECVIFKSSDGEMGVLAKHAPTVSAVSVGPLRINAQGKWIEAVVTEGFAKIMPDKVVILTDTAEYPEEIDINRAKAAKQRAEERLQKKLSQLEYMRSKTALARAMARLSATNRRR</sequence>
<comment type="function">
    <text evidence="1">Produces ATP from ADP in the presence of a proton gradient across the membrane.</text>
</comment>
<comment type="subunit">
    <text evidence="1">F-type ATPases have 2 components, CF(1) - the catalytic core - and CF(0) - the membrane proton channel. CF(1) has five subunits: alpha(3), beta(3), gamma(1), delta(1), epsilon(1). CF(0) has three main subunits: a, b and c.</text>
</comment>
<comment type="subcellular location">
    <subcellularLocation>
        <location evidence="1">Cell membrane</location>
        <topology evidence="1">Peripheral membrane protein</topology>
    </subcellularLocation>
</comment>
<comment type="similarity">
    <text evidence="1">Belongs to the ATPase epsilon chain family.</text>
</comment>
<organism>
    <name type="scientific">Ruminiclostridium cellulolyticum (strain ATCC 35319 / DSM 5812 / JCM 6584 / H10)</name>
    <name type="common">Clostridium cellulolyticum</name>
    <dbReference type="NCBI Taxonomy" id="394503"/>
    <lineage>
        <taxon>Bacteria</taxon>
        <taxon>Bacillati</taxon>
        <taxon>Bacillota</taxon>
        <taxon>Clostridia</taxon>
        <taxon>Eubacteriales</taxon>
        <taxon>Oscillospiraceae</taxon>
        <taxon>Ruminiclostridium</taxon>
    </lineage>
</organism>
<accession>B8I580</accession>
<gene>
    <name evidence="1" type="primary">atpC</name>
    <name type="ordered locus">Ccel_0273</name>
</gene>
<protein>
    <recommendedName>
        <fullName evidence="1">ATP synthase epsilon chain</fullName>
    </recommendedName>
    <alternativeName>
        <fullName evidence="1">ATP synthase F1 sector epsilon subunit</fullName>
    </alternativeName>
    <alternativeName>
        <fullName evidence="1">F-ATPase epsilon subunit</fullName>
    </alternativeName>
</protein>
<keyword id="KW-0066">ATP synthesis</keyword>
<keyword id="KW-1003">Cell membrane</keyword>
<keyword id="KW-0139">CF(1)</keyword>
<keyword id="KW-0375">Hydrogen ion transport</keyword>
<keyword id="KW-0406">Ion transport</keyword>
<keyword id="KW-0472">Membrane</keyword>
<keyword id="KW-1185">Reference proteome</keyword>
<keyword id="KW-0813">Transport</keyword>
<feature type="chain" id="PRO_1000211779" description="ATP synthase epsilon chain">
    <location>
        <begin position="1"/>
        <end position="134"/>
    </location>
</feature>
<dbReference type="EMBL" id="CP001348">
    <property type="protein sequence ID" value="ACL74660.1"/>
    <property type="molecule type" value="Genomic_DNA"/>
</dbReference>
<dbReference type="RefSeq" id="WP_012634725.1">
    <property type="nucleotide sequence ID" value="NC_011898.1"/>
</dbReference>
<dbReference type="SMR" id="B8I580"/>
<dbReference type="STRING" id="394503.Ccel_0273"/>
<dbReference type="KEGG" id="cce:Ccel_0273"/>
<dbReference type="eggNOG" id="COG0355">
    <property type="taxonomic scope" value="Bacteria"/>
</dbReference>
<dbReference type="HOGENOM" id="CLU_084338_1_3_9"/>
<dbReference type="OrthoDB" id="9804110at2"/>
<dbReference type="Proteomes" id="UP000001349">
    <property type="component" value="Chromosome"/>
</dbReference>
<dbReference type="GO" id="GO:0005886">
    <property type="term" value="C:plasma membrane"/>
    <property type="evidence" value="ECO:0007669"/>
    <property type="project" value="UniProtKB-SubCell"/>
</dbReference>
<dbReference type="GO" id="GO:0045259">
    <property type="term" value="C:proton-transporting ATP synthase complex"/>
    <property type="evidence" value="ECO:0007669"/>
    <property type="project" value="UniProtKB-KW"/>
</dbReference>
<dbReference type="GO" id="GO:0005524">
    <property type="term" value="F:ATP binding"/>
    <property type="evidence" value="ECO:0007669"/>
    <property type="project" value="UniProtKB-UniRule"/>
</dbReference>
<dbReference type="GO" id="GO:0046933">
    <property type="term" value="F:proton-transporting ATP synthase activity, rotational mechanism"/>
    <property type="evidence" value="ECO:0007669"/>
    <property type="project" value="UniProtKB-UniRule"/>
</dbReference>
<dbReference type="CDD" id="cd12152">
    <property type="entry name" value="F1-ATPase_delta"/>
    <property type="match status" value="1"/>
</dbReference>
<dbReference type="Gene3D" id="1.20.5.440">
    <property type="entry name" value="ATP synthase delta/epsilon subunit, C-terminal domain"/>
    <property type="match status" value="1"/>
</dbReference>
<dbReference type="Gene3D" id="2.60.15.10">
    <property type="entry name" value="F0F1 ATP synthase delta/epsilon subunit, N-terminal"/>
    <property type="match status" value="1"/>
</dbReference>
<dbReference type="HAMAP" id="MF_00530">
    <property type="entry name" value="ATP_synth_epsil_bac"/>
    <property type="match status" value="1"/>
</dbReference>
<dbReference type="InterPro" id="IPR036794">
    <property type="entry name" value="ATP_F1_dsu/esu_C_sf"/>
</dbReference>
<dbReference type="InterPro" id="IPR001469">
    <property type="entry name" value="ATP_synth_F1_dsu/esu"/>
</dbReference>
<dbReference type="InterPro" id="IPR020546">
    <property type="entry name" value="ATP_synth_F1_dsu/esu_N"/>
</dbReference>
<dbReference type="InterPro" id="IPR020547">
    <property type="entry name" value="ATP_synth_F1_esu_C"/>
</dbReference>
<dbReference type="InterPro" id="IPR036771">
    <property type="entry name" value="ATPsynth_dsu/esu_N"/>
</dbReference>
<dbReference type="NCBIfam" id="TIGR01216">
    <property type="entry name" value="ATP_synt_epsi"/>
    <property type="match status" value="1"/>
</dbReference>
<dbReference type="NCBIfam" id="NF009980">
    <property type="entry name" value="PRK13446.1"/>
    <property type="match status" value="1"/>
</dbReference>
<dbReference type="PANTHER" id="PTHR13822">
    <property type="entry name" value="ATP SYNTHASE DELTA/EPSILON CHAIN"/>
    <property type="match status" value="1"/>
</dbReference>
<dbReference type="PANTHER" id="PTHR13822:SF10">
    <property type="entry name" value="ATP SYNTHASE EPSILON CHAIN, CHLOROPLASTIC"/>
    <property type="match status" value="1"/>
</dbReference>
<dbReference type="Pfam" id="PF00401">
    <property type="entry name" value="ATP-synt_DE"/>
    <property type="match status" value="1"/>
</dbReference>
<dbReference type="Pfam" id="PF02823">
    <property type="entry name" value="ATP-synt_DE_N"/>
    <property type="match status" value="1"/>
</dbReference>
<dbReference type="SUPFAM" id="SSF46604">
    <property type="entry name" value="Epsilon subunit of F1F0-ATP synthase C-terminal domain"/>
    <property type="match status" value="1"/>
</dbReference>
<dbReference type="SUPFAM" id="SSF51344">
    <property type="entry name" value="Epsilon subunit of F1F0-ATP synthase N-terminal domain"/>
    <property type="match status" value="1"/>
</dbReference>
<name>ATPE_RUMCH</name>